<sequence length="166" mass="18711">MSKRIAVYPGSFDPITNGHLDIILRGLNIFDELIVAVAHNVAKTGLFSIDERLDLIRETVKDYPQVRVDTFKGLLVDYLTRQNARIVLRGLRAVSDFENEFQLAQMNHTMNTQLETLFMMTSVSYGYLSSSIVKEVAAWGGDIDDFVPPCVKDALKTKFPDAPRID</sequence>
<organism>
    <name type="scientific">Syntrophotalea carbinolica (strain DSM 2380 / NBRC 103641 / GraBd1)</name>
    <name type="common">Pelobacter carbinolicus</name>
    <dbReference type="NCBI Taxonomy" id="338963"/>
    <lineage>
        <taxon>Bacteria</taxon>
        <taxon>Pseudomonadati</taxon>
        <taxon>Thermodesulfobacteriota</taxon>
        <taxon>Desulfuromonadia</taxon>
        <taxon>Desulfuromonadales</taxon>
        <taxon>Syntrophotaleaceae</taxon>
        <taxon>Syntrophotalea</taxon>
    </lineage>
</organism>
<protein>
    <recommendedName>
        <fullName evidence="1">Phosphopantetheine adenylyltransferase</fullName>
        <ecNumber evidence="1">2.7.7.3</ecNumber>
    </recommendedName>
    <alternativeName>
        <fullName evidence="1">Dephospho-CoA pyrophosphorylase</fullName>
    </alternativeName>
    <alternativeName>
        <fullName evidence="1">Pantetheine-phosphate adenylyltransferase</fullName>
        <shortName evidence="1">PPAT</shortName>
    </alternativeName>
</protein>
<comment type="function">
    <text evidence="1">Reversibly transfers an adenylyl group from ATP to 4'-phosphopantetheine, yielding dephospho-CoA (dPCoA) and pyrophosphate.</text>
</comment>
<comment type="catalytic activity">
    <reaction evidence="1">
        <text>(R)-4'-phosphopantetheine + ATP + H(+) = 3'-dephospho-CoA + diphosphate</text>
        <dbReference type="Rhea" id="RHEA:19801"/>
        <dbReference type="ChEBI" id="CHEBI:15378"/>
        <dbReference type="ChEBI" id="CHEBI:30616"/>
        <dbReference type="ChEBI" id="CHEBI:33019"/>
        <dbReference type="ChEBI" id="CHEBI:57328"/>
        <dbReference type="ChEBI" id="CHEBI:61723"/>
        <dbReference type="EC" id="2.7.7.3"/>
    </reaction>
</comment>
<comment type="cofactor">
    <cofactor evidence="1">
        <name>Mg(2+)</name>
        <dbReference type="ChEBI" id="CHEBI:18420"/>
    </cofactor>
</comment>
<comment type="pathway">
    <text evidence="1">Cofactor biosynthesis; coenzyme A biosynthesis; CoA from (R)-pantothenate: step 4/5.</text>
</comment>
<comment type="subunit">
    <text evidence="1">Homohexamer.</text>
</comment>
<comment type="subcellular location">
    <subcellularLocation>
        <location evidence="1">Cytoplasm</location>
    </subcellularLocation>
</comment>
<comment type="similarity">
    <text evidence="1">Belongs to the bacterial CoaD family.</text>
</comment>
<proteinExistence type="inferred from homology"/>
<feature type="chain" id="PRO_1000011195" description="Phosphopantetheine adenylyltransferase">
    <location>
        <begin position="1"/>
        <end position="166"/>
    </location>
</feature>
<feature type="binding site" evidence="1">
    <location>
        <begin position="11"/>
        <end position="12"/>
    </location>
    <ligand>
        <name>ATP</name>
        <dbReference type="ChEBI" id="CHEBI:30616"/>
    </ligand>
</feature>
<feature type="binding site" evidence="1">
    <location>
        <position position="11"/>
    </location>
    <ligand>
        <name>substrate</name>
    </ligand>
</feature>
<feature type="binding site" evidence="1">
    <location>
        <position position="19"/>
    </location>
    <ligand>
        <name>ATP</name>
        <dbReference type="ChEBI" id="CHEBI:30616"/>
    </ligand>
</feature>
<feature type="binding site" evidence="1">
    <location>
        <position position="43"/>
    </location>
    <ligand>
        <name>substrate</name>
    </ligand>
</feature>
<feature type="binding site" evidence="1">
    <location>
        <position position="75"/>
    </location>
    <ligand>
        <name>substrate</name>
    </ligand>
</feature>
<feature type="binding site" evidence="1">
    <location>
        <position position="89"/>
    </location>
    <ligand>
        <name>substrate</name>
    </ligand>
</feature>
<feature type="binding site" evidence="1">
    <location>
        <begin position="90"/>
        <end position="92"/>
    </location>
    <ligand>
        <name>ATP</name>
        <dbReference type="ChEBI" id="CHEBI:30616"/>
    </ligand>
</feature>
<feature type="binding site" evidence="1">
    <location>
        <position position="100"/>
    </location>
    <ligand>
        <name>ATP</name>
        <dbReference type="ChEBI" id="CHEBI:30616"/>
    </ligand>
</feature>
<feature type="binding site" evidence="1">
    <location>
        <begin position="125"/>
        <end position="131"/>
    </location>
    <ligand>
        <name>ATP</name>
        <dbReference type="ChEBI" id="CHEBI:30616"/>
    </ligand>
</feature>
<feature type="site" description="Transition state stabilizer" evidence="1">
    <location>
        <position position="19"/>
    </location>
</feature>
<keyword id="KW-0067">ATP-binding</keyword>
<keyword id="KW-0173">Coenzyme A biosynthesis</keyword>
<keyword id="KW-0963">Cytoplasm</keyword>
<keyword id="KW-0460">Magnesium</keyword>
<keyword id="KW-0547">Nucleotide-binding</keyword>
<keyword id="KW-0548">Nucleotidyltransferase</keyword>
<keyword id="KW-1185">Reference proteome</keyword>
<keyword id="KW-0808">Transferase</keyword>
<evidence type="ECO:0000255" key="1">
    <source>
        <dbReference type="HAMAP-Rule" id="MF_00151"/>
    </source>
</evidence>
<dbReference type="EC" id="2.7.7.3" evidence="1"/>
<dbReference type="EMBL" id="CP000142">
    <property type="protein sequence ID" value="ABA88884.1"/>
    <property type="molecule type" value="Genomic_DNA"/>
</dbReference>
<dbReference type="RefSeq" id="WP_011341373.1">
    <property type="nucleotide sequence ID" value="NC_007498.2"/>
</dbReference>
<dbReference type="SMR" id="Q3A423"/>
<dbReference type="STRING" id="338963.Pcar_1640"/>
<dbReference type="KEGG" id="pca:Pcar_1640"/>
<dbReference type="eggNOG" id="COG0669">
    <property type="taxonomic scope" value="Bacteria"/>
</dbReference>
<dbReference type="HOGENOM" id="CLU_100149_0_1_7"/>
<dbReference type="OrthoDB" id="9806661at2"/>
<dbReference type="UniPathway" id="UPA00241">
    <property type="reaction ID" value="UER00355"/>
</dbReference>
<dbReference type="Proteomes" id="UP000002534">
    <property type="component" value="Chromosome"/>
</dbReference>
<dbReference type="GO" id="GO:0005737">
    <property type="term" value="C:cytoplasm"/>
    <property type="evidence" value="ECO:0007669"/>
    <property type="project" value="UniProtKB-SubCell"/>
</dbReference>
<dbReference type="GO" id="GO:0005524">
    <property type="term" value="F:ATP binding"/>
    <property type="evidence" value="ECO:0007669"/>
    <property type="project" value="UniProtKB-KW"/>
</dbReference>
<dbReference type="GO" id="GO:0004595">
    <property type="term" value="F:pantetheine-phosphate adenylyltransferase activity"/>
    <property type="evidence" value="ECO:0007669"/>
    <property type="project" value="UniProtKB-UniRule"/>
</dbReference>
<dbReference type="GO" id="GO:0015937">
    <property type="term" value="P:coenzyme A biosynthetic process"/>
    <property type="evidence" value="ECO:0007669"/>
    <property type="project" value="UniProtKB-UniRule"/>
</dbReference>
<dbReference type="CDD" id="cd02163">
    <property type="entry name" value="PPAT"/>
    <property type="match status" value="1"/>
</dbReference>
<dbReference type="Gene3D" id="3.40.50.620">
    <property type="entry name" value="HUPs"/>
    <property type="match status" value="1"/>
</dbReference>
<dbReference type="HAMAP" id="MF_00151">
    <property type="entry name" value="PPAT_bact"/>
    <property type="match status" value="1"/>
</dbReference>
<dbReference type="InterPro" id="IPR004821">
    <property type="entry name" value="Cyt_trans-like"/>
</dbReference>
<dbReference type="InterPro" id="IPR001980">
    <property type="entry name" value="PPAT"/>
</dbReference>
<dbReference type="InterPro" id="IPR014729">
    <property type="entry name" value="Rossmann-like_a/b/a_fold"/>
</dbReference>
<dbReference type="NCBIfam" id="TIGR01510">
    <property type="entry name" value="coaD_prev_kdtB"/>
    <property type="match status" value="1"/>
</dbReference>
<dbReference type="NCBIfam" id="TIGR00125">
    <property type="entry name" value="cyt_tran_rel"/>
    <property type="match status" value="1"/>
</dbReference>
<dbReference type="PANTHER" id="PTHR21342">
    <property type="entry name" value="PHOSPHOPANTETHEINE ADENYLYLTRANSFERASE"/>
    <property type="match status" value="1"/>
</dbReference>
<dbReference type="PANTHER" id="PTHR21342:SF1">
    <property type="entry name" value="PHOSPHOPANTETHEINE ADENYLYLTRANSFERASE"/>
    <property type="match status" value="1"/>
</dbReference>
<dbReference type="Pfam" id="PF01467">
    <property type="entry name" value="CTP_transf_like"/>
    <property type="match status" value="1"/>
</dbReference>
<dbReference type="PRINTS" id="PR01020">
    <property type="entry name" value="LPSBIOSNTHSS"/>
</dbReference>
<dbReference type="SUPFAM" id="SSF52374">
    <property type="entry name" value="Nucleotidylyl transferase"/>
    <property type="match status" value="1"/>
</dbReference>
<reference key="1">
    <citation type="submission" date="2005-10" db="EMBL/GenBank/DDBJ databases">
        <title>Complete sequence of Pelobacter carbinolicus DSM 2380.</title>
        <authorList>
            <person name="Copeland A."/>
            <person name="Lucas S."/>
            <person name="Lapidus A."/>
            <person name="Barry K."/>
            <person name="Detter J.C."/>
            <person name="Glavina T."/>
            <person name="Hammon N."/>
            <person name="Israni S."/>
            <person name="Pitluck S."/>
            <person name="Chertkov O."/>
            <person name="Schmutz J."/>
            <person name="Larimer F."/>
            <person name="Land M."/>
            <person name="Kyrpides N."/>
            <person name="Ivanova N."/>
            <person name="Richardson P."/>
        </authorList>
    </citation>
    <scope>NUCLEOTIDE SEQUENCE [LARGE SCALE GENOMIC DNA]</scope>
    <source>
        <strain>DSM 2380 / NBRC 103641 / GraBd1</strain>
    </source>
</reference>
<name>COAD_SYNC1</name>
<accession>Q3A423</accession>
<gene>
    <name evidence="1" type="primary">coaD</name>
    <name type="ordered locus">Pcar_1640</name>
</gene>